<protein>
    <recommendedName>
        <fullName evidence="1">Large ribosomal subunit protein bL33</fullName>
    </recommendedName>
    <alternativeName>
        <fullName evidence="2">50S ribosomal protein L33</fullName>
    </alternativeName>
</protein>
<keyword id="KW-0687">Ribonucleoprotein</keyword>
<keyword id="KW-0689">Ribosomal protein</keyword>
<comment type="similarity">
    <text evidence="1">Belongs to the bacterial ribosomal protein bL33 family.</text>
</comment>
<name>RL33_RUTMC</name>
<accession>A1AXP2</accession>
<sequence>MREKIRLVSSAKTGHFYTTTKNKRLHPEKIEIKKFDPVVRKHVVYKEAKIK</sequence>
<proteinExistence type="inferred from homology"/>
<reference key="1">
    <citation type="journal article" date="2007" name="Science">
        <title>The Calyptogena magnifica chemoautotrophic symbiont genome.</title>
        <authorList>
            <person name="Newton I.L.G."/>
            <person name="Woyke T."/>
            <person name="Auchtung T.A."/>
            <person name="Dilly G.F."/>
            <person name="Dutton R.J."/>
            <person name="Fisher M.C."/>
            <person name="Fontanez K.M."/>
            <person name="Lau E."/>
            <person name="Stewart F.J."/>
            <person name="Richardson P.M."/>
            <person name="Barry K.W."/>
            <person name="Saunders E."/>
            <person name="Detter J.C."/>
            <person name="Wu D."/>
            <person name="Eisen J.A."/>
            <person name="Cavanaugh C.M."/>
        </authorList>
    </citation>
    <scope>NUCLEOTIDE SEQUENCE [LARGE SCALE GENOMIC DNA]</scope>
</reference>
<dbReference type="EMBL" id="CP000488">
    <property type="protein sequence ID" value="ABL02699.1"/>
    <property type="molecule type" value="Genomic_DNA"/>
</dbReference>
<dbReference type="RefSeq" id="WP_011738324.1">
    <property type="nucleotide sequence ID" value="NC_008610.1"/>
</dbReference>
<dbReference type="SMR" id="A1AXP2"/>
<dbReference type="STRING" id="413404.Rmag_0993"/>
<dbReference type="KEGG" id="rma:Rmag_0993"/>
<dbReference type="eggNOG" id="COG0267">
    <property type="taxonomic scope" value="Bacteria"/>
</dbReference>
<dbReference type="HOGENOM" id="CLU_190949_1_1_6"/>
<dbReference type="OrthoDB" id="21586at2"/>
<dbReference type="Proteomes" id="UP000002587">
    <property type="component" value="Chromosome"/>
</dbReference>
<dbReference type="GO" id="GO:0022625">
    <property type="term" value="C:cytosolic large ribosomal subunit"/>
    <property type="evidence" value="ECO:0007669"/>
    <property type="project" value="TreeGrafter"/>
</dbReference>
<dbReference type="GO" id="GO:0003735">
    <property type="term" value="F:structural constituent of ribosome"/>
    <property type="evidence" value="ECO:0007669"/>
    <property type="project" value="InterPro"/>
</dbReference>
<dbReference type="GO" id="GO:0006412">
    <property type="term" value="P:translation"/>
    <property type="evidence" value="ECO:0007669"/>
    <property type="project" value="UniProtKB-UniRule"/>
</dbReference>
<dbReference type="FunFam" id="2.20.28.120:FF:000001">
    <property type="entry name" value="50S ribosomal protein L33"/>
    <property type="match status" value="1"/>
</dbReference>
<dbReference type="Gene3D" id="2.20.28.120">
    <property type="entry name" value="Ribosomal protein L33"/>
    <property type="match status" value="1"/>
</dbReference>
<dbReference type="HAMAP" id="MF_00294">
    <property type="entry name" value="Ribosomal_bL33"/>
    <property type="match status" value="1"/>
</dbReference>
<dbReference type="InterPro" id="IPR001705">
    <property type="entry name" value="Ribosomal_bL33"/>
</dbReference>
<dbReference type="InterPro" id="IPR018264">
    <property type="entry name" value="Ribosomal_bL33_CS"/>
</dbReference>
<dbReference type="InterPro" id="IPR038584">
    <property type="entry name" value="Ribosomal_bL33_sf"/>
</dbReference>
<dbReference type="InterPro" id="IPR011332">
    <property type="entry name" value="Ribosomal_zn-bd"/>
</dbReference>
<dbReference type="NCBIfam" id="NF001860">
    <property type="entry name" value="PRK00595.1"/>
    <property type="match status" value="1"/>
</dbReference>
<dbReference type="NCBIfam" id="TIGR01023">
    <property type="entry name" value="rpmG_bact"/>
    <property type="match status" value="1"/>
</dbReference>
<dbReference type="PANTHER" id="PTHR15238">
    <property type="entry name" value="54S RIBOSOMAL PROTEIN L39, MITOCHONDRIAL"/>
    <property type="match status" value="1"/>
</dbReference>
<dbReference type="PANTHER" id="PTHR15238:SF1">
    <property type="entry name" value="LARGE RIBOSOMAL SUBUNIT PROTEIN BL33M"/>
    <property type="match status" value="1"/>
</dbReference>
<dbReference type="Pfam" id="PF00471">
    <property type="entry name" value="Ribosomal_L33"/>
    <property type="match status" value="1"/>
</dbReference>
<dbReference type="SUPFAM" id="SSF57829">
    <property type="entry name" value="Zn-binding ribosomal proteins"/>
    <property type="match status" value="1"/>
</dbReference>
<dbReference type="PROSITE" id="PS00582">
    <property type="entry name" value="RIBOSOMAL_L33"/>
    <property type="match status" value="1"/>
</dbReference>
<feature type="chain" id="PRO_0000356639" description="Large ribosomal subunit protein bL33">
    <location>
        <begin position="1"/>
        <end position="51"/>
    </location>
</feature>
<gene>
    <name evidence="1" type="primary">rpmG</name>
    <name type="ordered locus">Rmag_0993</name>
</gene>
<organism>
    <name type="scientific">Ruthia magnifica subsp. Calyptogena magnifica</name>
    <dbReference type="NCBI Taxonomy" id="413404"/>
    <lineage>
        <taxon>Bacteria</taxon>
        <taxon>Pseudomonadati</taxon>
        <taxon>Pseudomonadota</taxon>
        <taxon>Gammaproteobacteria</taxon>
        <taxon>Candidatus Pseudothioglobaceae</taxon>
        <taxon>Candidatus Ruthturnera</taxon>
    </lineage>
</organism>
<evidence type="ECO:0000255" key="1">
    <source>
        <dbReference type="HAMAP-Rule" id="MF_00294"/>
    </source>
</evidence>
<evidence type="ECO:0000305" key="2"/>